<name>GLPK_STRGC</name>
<feature type="chain" id="PRO_1000077435" description="Glycerol kinase">
    <location>
        <begin position="1"/>
        <end position="502"/>
    </location>
</feature>
<feature type="binding site" evidence="1">
    <location>
        <position position="14"/>
    </location>
    <ligand>
        <name>ADP</name>
        <dbReference type="ChEBI" id="CHEBI:456216"/>
    </ligand>
</feature>
<feature type="binding site" evidence="1">
    <location>
        <position position="14"/>
    </location>
    <ligand>
        <name>ATP</name>
        <dbReference type="ChEBI" id="CHEBI:30616"/>
    </ligand>
</feature>
<feature type="binding site" evidence="1">
    <location>
        <position position="14"/>
    </location>
    <ligand>
        <name>sn-glycerol 3-phosphate</name>
        <dbReference type="ChEBI" id="CHEBI:57597"/>
    </ligand>
</feature>
<feature type="binding site" evidence="1">
    <location>
        <position position="15"/>
    </location>
    <ligand>
        <name>ATP</name>
        <dbReference type="ChEBI" id="CHEBI:30616"/>
    </ligand>
</feature>
<feature type="binding site" evidence="1">
    <location>
        <position position="16"/>
    </location>
    <ligand>
        <name>ATP</name>
        <dbReference type="ChEBI" id="CHEBI:30616"/>
    </ligand>
</feature>
<feature type="binding site" evidence="1">
    <location>
        <position position="18"/>
    </location>
    <ligand>
        <name>ADP</name>
        <dbReference type="ChEBI" id="CHEBI:456216"/>
    </ligand>
</feature>
<feature type="binding site" evidence="1">
    <location>
        <position position="84"/>
    </location>
    <ligand>
        <name>glycerol</name>
        <dbReference type="ChEBI" id="CHEBI:17754"/>
    </ligand>
</feature>
<feature type="binding site" evidence="1">
    <location>
        <position position="84"/>
    </location>
    <ligand>
        <name>sn-glycerol 3-phosphate</name>
        <dbReference type="ChEBI" id="CHEBI:57597"/>
    </ligand>
</feature>
<feature type="binding site" evidence="1">
    <location>
        <position position="85"/>
    </location>
    <ligand>
        <name>glycerol</name>
        <dbReference type="ChEBI" id="CHEBI:17754"/>
    </ligand>
</feature>
<feature type="binding site" evidence="1">
    <location>
        <position position="85"/>
    </location>
    <ligand>
        <name>sn-glycerol 3-phosphate</name>
        <dbReference type="ChEBI" id="CHEBI:57597"/>
    </ligand>
</feature>
<feature type="binding site" evidence="1">
    <location>
        <position position="136"/>
    </location>
    <ligand>
        <name>glycerol</name>
        <dbReference type="ChEBI" id="CHEBI:17754"/>
    </ligand>
</feature>
<feature type="binding site" evidence="1">
    <location>
        <position position="136"/>
    </location>
    <ligand>
        <name>sn-glycerol 3-phosphate</name>
        <dbReference type="ChEBI" id="CHEBI:57597"/>
    </ligand>
</feature>
<feature type="binding site" evidence="1">
    <location>
        <position position="246"/>
    </location>
    <ligand>
        <name>glycerol</name>
        <dbReference type="ChEBI" id="CHEBI:17754"/>
    </ligand>
</feature>
<feature type="binding site" evidence="1">
    <location>
        <position position="246"/>
    </location>
    <ligand>
        <name>sn-glycerol 3-phosphate</name>
        <dbReference type="ChEBI" id="CHEBI:57597"/>
    </ligand>
</feature>
<feature type="binding site" evidence="1">
    <location>
        <position position="247"/>
    </location>
    <ligand>
        <name>glycerol</name>
        <dbReference type="ChEBI" id="CHEBI:17754"/>
    </ligand>
</feature>
<feature type="binding site" evidence="1">
    <location>
        <position position="268"/>
    </location>
    <ligand>
        <name>ADP</name>
        <dbReference type="ChEBI" id="CHEBI:456216"/>
    </ligand>
</feature>
<feature type="binding site" evidence="1">
    <location>
        <position position="268"/>
    </location>
    <ligand>
        <name>ATP</name>
        <dbReference type="ChEBI" id="CHEBI:30616"/>
    </ligand>
</feature>
<feature type="binding site" evidence="1">
    <location>
        <position position="311"/>
    </location>
    <ligand>
        <name>ADP</name>
        <dbReference type="ChEBI" id="CHEBI:456216"/>
    </ligand>
</feature>
<feature type="binding site" evidence="1">
    <location>
        <position position="311"/>
    </location>
    <ligand>
        <name>ATP</name>
        <dbReference type="ChEBI" id="CHEBI:30616"/>
    </ligand>
</feature>
<feature type="binding site" evidence="1">
    <location>
        <position position="315"/>
    </location>
    <ligand>
        <name>ATP</name>
        <dbReference type="ChEBI" id="CHEBI:30616"/>
    </ligand>
</feature>
<feature type="binding site" evidence="1">
    <location>
        <position position="412"/>
    </location>
    <ligand>
        <name>ADP</name>
        <dbReference type="ChEBI" id="CHEBI:456216"/>
    </ligand>
</feature>
<feature type="binding site" evidence="1">
    <location>
        <position position="412"/>
    </location>
    <ligand>
        <name>ATP</name>
        <dbReference type="ChEBI" id="CHEBI:30616"/>
    </ligand>
</feature>
<feature type="binding site" evidence="1">
    <location>
        <position position="416"/>
    </location>
    <ligand>
        <name>ADP</name>
        <dbReference type="ChEBI" id="CHEBI:456216"/>
    </ligand>
</feature>
<feature type="modified residue" description="Phosphohistidine; by HPr" evidence="1">
    <location>
        <position position="232"/>
    </location>
</feature>
<evidence type="ECO:0000255" key="1">
    <source>
        <dbReference type="HAMAP-Rule" id="MF_00186"/>
    </source>
</evidence>
<comment type="function">
    <text evidence="1">Key enzyme in the regulation of glycerol uptake and metabolism. Catalyzes the phosphorylation of glycerol to yield sn-glycerol 3-phosphate.</text>
</comment>
<comment type="catalytic activity">
    <reaction evidence="1">
        <text>glycerol + ATP = sn-glycerol 3-phosphate + ADP + H(+)</text>
        <dbReference type="Rhea" id="RHEA:21644"/>
        <dbReference type="ChEBI" id="CHEBI:15378"/>
        <dbReference type="ChEBI" id="CHEBI:17754"/>
        <dbReference type="ChEBI" id="CHEBI:30616"/>
        <dbReference type="ChEBI" id="CHEBI:57597"/>
        <dbReference type="ChEBI" id="CHEBI:456216"/>
        <dbReference type="EC" id="2.7.1.30"/>
    </reaction>
</comment>
<comment type="activity regulation">
    <text evidence="1">Activated by phosphorylation and inhibited by fructose 1,6-bisphosphate (FBP).</text>
</comment>
<comment type="pathway">
    <text evidence="1">Polyol metabolism; glycerol degradation via glycerol kinase pathway; sn-glycerol 3-phosphate from glycerol: step 1/1.</text>
</comment>
<comment type="subunit">
    <text evidence="1">Homotetramer and homodimer (in equilibrium).</text>
</comment>
<comment type="PTM">
    <text evidence="1">The phosphoenolpyruvate-dependent sugar phosphotransferase system (PTS), including enzyme I, and histidine-containing protein (HPr) are required for the phosphorylation, which leads to the activation of the enzyme.</text>
</comment>
<comment type="similarity">
    <text evidence="1">Belongs to the FGGY kinase family.</text>
</comment>
<sequence>MSQEKYIMAIDQGTTSSRAIIFNKKGEKVSSSQKEFTQIFPQAGWVEHNANEIWNSVQSVIAGAFIESGVKPNQIEAIGITNQRETTVVWDKNTGLPIYNAIVWQSRQTAPLAEQLKSQGYVEKFHEKTGLIIDAYFSATKVRWILDHVEGAQERAEKGELLFGTIDTWLVWKLTDGAAHVTDYSNAARTMLYNIKELKWDDEILEILNIPKAMLPEVRSNSEIYGKTAPFHFYGGEVPISGMAGDQQAALFGQLAFEPGMVKNTYGTGSFIIMNTGEEMQLSENNLLTTIGYGINGKVYYALEGSIFIAGSAIQWLRDGLRMVENSPESEKYALNSHNNDEVYVVPAFTGLGAPYWDQNARGSVFGLTRGTSKEDFIKATLQSIAYQVRDIIDTMQVDAKTAIQVLKVDGGAAMNNFLMQFQADILGIDIARAKNLETTALGAAFLAGLSVGYWKDLDELRTLNETGELFEPSMNESRKEQLYKGWKKAVKATQVFAEIDD</sequence>
<dbReference type="EC" id="2.7.1.30" evidence="1"/>
<dbReference type="EMBL" id="CP000725">
    <property type="protein sequence ID" value="ABV10571.1"/>
    <property type="molecule type" value="Genomic_DNA"/>
</dbReference>
<dbReference type="RefSeq" id="WP_002905838.1">
    <property type="nucleotide sequence ID" value="NC_009785.1"/>
</dbReference>
<dbReference type="SMR" id="A8AVX5"/>
<dbReference type="STRING" id="467705.SGO_0632"/>
<dbReference type="KEGG" id="sgo:SGO_0632"/>
<dbReference type="eggNOG" id="COG0554">
    <property type="taxonomic scope" value="Bacteria"/>
</dbReference>
<dbReference type="HOGENOM" id="CLU_009281_2_3_9"/>
<dbReference type="UniPathway" id="UPA00618">
    <property type="reaction ID" value="UER00672"/>
</dbReference>
<dbReference type="Proteomes" id="UP000001131">
    <property type="component" value="Chromosome"/>
</dbReference>
<dbReference type="GO" id="GO:0005829">
    <property type="term" value="C:cytosol"/>
    <property type="evidence" value="ECO:0007669"/>
    <property type="project" value="TreeGrafter"/>
</dbReference>
<dbReference type="GO" id="GO:0005524">
    <property type="term" value="F:ATP binding"/>
    <property type="evidence" value="ECO:0007669"/>
    <property type="project" value="UniProtKB-UniRule"/>
</dbReference>
<dbReference type="GO" id="GO:0004370">
    <property type="term" value="F:glycerol kinase activity"/>
    <property type="evidence" value="ECO:0000250"/>
    <property type="project" value="UniProtKB"/>
</dbReference>
<dbReference type="GO" id="GO:0019563">
    <property type="term" value="P:glycerol catabolic process"/>
    <property type="evidence" value="ECO:0007669"/>
    <property type="project" value="UniProtKB-UniRule"/>
</dbReference>
<dbReference type="GO" id="GO:0006071">
    <property type="term" value="P:glycerol metabolic process"/>
    <property type="evidence" value="ECO:0000250"/>
    <property type="project" value="UniProtKB"/>
</dbReference>
<dbReference type="GO" id="GO:0006072">
    <property type="term" value="P:glycerol-3-phosphate metabolic process"/>
    <property type="evidence" value="ECO:0007669"/>
    <property type="project" value="InterPro"/>
</dbReference>
<dbReference type="CDD" id="cd07786">
    <property type="entry name" value="FGGY_EcGK_like"/>
    <property type="match status" value="1"/>
</dbReference>
<dbReference type="FunFam" id="3.30.420.40:FF:000007">
    <property type="entry name" value="Glycerol kinase"/>
    <property type="match status" value="1"/>
</dbReference>
<dbReference type="FunFam" id="3.30.420.40:FF:000008">
    <property type="entry name" value="Glycerol kinase"/>
    <property type="match status" value="1"/>
</dbReference>
<dbReference type="Gene3D" id="3.30.420.40">
    <property type="match status" value="2"/>
</dbReference>
<dbReference type="HAMAP" id="MF_00186">
    <property type="entry name" value="Glycerol_kin"/>
    <property type="match status" value="1"/>
</dbReference>
<dbReference type="InterPro" id="IPR043129">
    <property type="entry name" value="ATPase_NBD"/>
</dbReference>
<dbReference type="InterPro" id="IPR000577">
    <property type="entry name" value="Carb_kinase_FGGY"/>
</dbReference>
<dbReference type="InterPro" id="IPR018483">
    <property type="entry name" value="Carb_kinase_FGGY_CS"/>
</dbReference>
<dbReference type="InterPro" id="IPR018485">
    <property type="entry name" value="FGGY_C"/>
</dbReference>
<dbReference type="InterPro" id="IPR018484">
    <property type="entry name" value="FGGY_N"/>
</dbReference>
<dbReference type="InterPro" id="IPR005999">
    <property type="entry name" value="Glycerol_kin"/>
</dbReference>
<dbReference type="NCBIfam" id="TIGR01311">
    <property type="entry name" value="glycerol_kin"/>
    <property type="match status" value="1"/>
</dbReference>
<dbReference type="NCBIfam" id="NF000756">
    <property type="entry name" value="PRK00047.1"/>
    <property type="match status" value="1"/>
</dbReference>
<dbReference type="PANTHER" id="PTHR10196:SF69">
    <property type="entry name" value="GLYCEROL KINASE"/>
    <property type="match status" value="1"/>
</dbReference>
<dbReference type="PANTHER" id="PTHR10196">
    <property type="entry name" value="SUGAR KINASE"/>
    <property type="match status" value="1"/>
</dbReference>
<dbReference type="Pfam" id="PF02782">
    <property type="entry name" value="FGGY_C"/>
    <property type="match status" value="1"/>
</dbReference>
<dbReference type="Pfam" id="PF00370">
    <property type="entry name" value="FGGY_N"/>
    <property type="match status" value="1"/>
</dbReference>
<dbReference type="PIRSF" id="PIRSF000538">
    <property type="entry name" value="GlpK"/>
    <property type="match status" value="1"/>
</dbReference>
<dbReference type="SUPFAM" id="SSF53067">
    <property type="entry name" value="Actin-like ATPase domain"/>
    <property type="match status" value="2"/>
</dbReference>
<dbReference type="PROSITE" id="PS00933">
    <property type="entry name" value="FGGY_KINASES_1"/>
    <property type="match status" value="1"/>
</dbReference>
<dbReference type="PROSITE" id="PS00445">
    <property type="entry name" value="FGGY_KINASES_2"/>
    <property type="match status" value="1"/>
</dbReference>
<keyword id="KW-0067">ATP-binding</keyword>
<keyword id="KW-0319">Glycerol metabolism</keyword>
<keyword id="KW-0418">Kinase</keyword>
<keyword id="KW-0547">Nucleotide-binding</keyword>
<keyword id="KW-0597">Phosphoprotein</keyword>
<keyword id="KW-1185">Reference proteome</keyword>
<keyword id="KW-0808">Transferase</keyword>
<protein>
    <recommendedName>
        <fullName evidence="1">Glycerol kinase</fullName>
        <ecNumber evidence="1">2.7.1.30</ecNumber>
    </recommendedName>
    <alternativeName>
        <fullName evidence="1">ATP:glycerol 3-phosphotransferase</fullName>
    </alternativeName>
    <alternativeName>
        <fullName evidence="1">Glycerokinase</fullName>
        <shortName evidence="1">GK</shortName>
    </alternativeName>
</protein>
<gene>
    <name evidence="1" type="primary">glpK</name>
    <name type="ordered locus">SGO_0632</name>
</gene>
<reference key="1">
    <citation type="journal article" date="2007" name="J. Bacteriol.">
        <title>Genome-wide transcriptional changes in Streptococcus gordonii in response to competence signaling peptide.</title>
        <authorList>
            <person name="Vickerman M.M."/>
            <person name="Iobst S."/>
            <person name="Jesionowski A.M."/>
            <person name="Gill S.R."/>
        </authorList>
    </citation>
    <scope>NUCLEOTIDE SEQUENCE [LARGE SCALE GENOMIC DNA]</scope>
    <source>
        <strain>Challis / ATCC 35105 / BCRC 15272 / CH1 / DL1 / V288</strain>
    </source>
</reference>
<accession>A8AVX5</accession>
<organism>
    <name type="scientific">Streptococcus gordonii (strain Challis / ATCC 35105 / BCRC 15272 / CH1 / DL1 / V288)</name>
    <dbReference type="NCBI Taxonomy" id="467705"/>
    <lineage>
        <taxon>Bacteria</taxon>
        <taxon>Bacillati</taxon>
        <taxon>Bacillota</taxon>
        <taxon>Bacilli</taxon>
        <taxon>Lactobacillales</taxon>
        <taxon>Streptococcaceae</taxon>
        <taxon>Streptococcus</taxon>
    </lineage>
</organism>
<proteinExistence type="inferred from homology"/>